<keyword id="KW-0002">3D-structure</keyword>
<keyword id="KW-0963">Cytoplasm</keyword>
<keyword id="KW-0539">Nucleus</keyword>
<keyword id="KW-1185">Reference proteome</keyword>
<keyword id="KW-0677">Repeat</keyword>
<keyword id="KW-0853">WD repeat</keyword>
<comment type="function">
    <text evidence="1 3">Essential component of the cytosolic iron-sulfur (Fe/S) protein assembly machinery. Required for the maturation of extramitochondrial Fe/S proteins.</text>
</comment>
<comment type="subunit">
    <text evidence="1 3">Interacts with NAR1.</text>
</comment>
<comment type="interaction">
    <interactant intactId="EBI-32145">
        <id>Q05583</id>
    </interactant>
    <interactant intactId="EBI-11492">
        <id>P40469</id>
        <label>MET18</label>
    </interactant>
    <organismsDiffer>false</organismsDiffer>
    <experiments>6</experiments>
</comment>
<comment type="interaction">
    <interactant intactId="EBI-32145">
        <id>Q05583</id>
    </interactant>
    <interactant intactId="EBI-11864">
        <id>P23503</id>
        <label>NAR1</label>
    </interactant>
    <organismsDiffer>false</organismsDiffer>
    <experiments>3</experiments>
</comment>
<comment type="interaction">
    <interactant intactId="EBI-32145">
        <id>Q05583</id>
    </interactant>
    <interactant intactId="EBI-24704">
        <id>P38829</id>
        <label>YHR122W</label>
    </interactant>
    <organismsDiffer>false</organismsDiffer>
    <experiments>7</experiments>
</comment>
<comment type="subcellular location">
    <subcellularLocation>
        <location>Cytoplasm</location>
    </subcellularLocation>
    <subcellularLocation>
        <location>Nucleus</location>
    </subcellularLocation>
    <text>Preferentially localized to the nucleus.</text>
</comment>
<comment type="miscellaneous">
    <text evidence="2">Present with 5640 molecules/cell in log phase SD medium.</text>
</comment>
<comment type="similarity">
    <text evidence="1">Belongs to the WD repeat CIA1 family.</text>
</comment>
<dbReference type="EMBL" id="U51030">
    <property type="protein sequence ID" value="AAB64456.1"/>
    <property type="molecule type" value="Genomic_DNA"/>
</dbReference>
<dbReference type="EMBL" id="BK006938">
    <property type="protein sequence ID" value="DAA12111.1"/>
    <property type="molecule type" value="Genomic_DNA"/>
</dbReference>
<dbReference type="PIR" id="S70127">
    <property type="entry name" value="S70127"/>
</dbReference>
<dbReference type="RefSeq" id="NP_010553.3">
    <property type="nucleotide sequence ID" value="NM_001180575.3"/>
</dbReference>
<dbReference type="PDB" id="2HES">
    <property type="method" value="X-ray"/>
    <property type="resolution" value="1.70 A"/>
    <property type="chains" value="X=1-330"/>
</dbReference>
<dbReference type="PDBsum" id="2HES"/>
<dbReference type="SMR" id="Q05583"/>
<dbReference type="BioGRID" id="32323">
    <property type="interactions" value="70"/>
</dbReference>
<dbReference type="ComplexPortal" id="CPX-2321">
    <property type="entry name" value="CIA targeting complex"/>
</dbReference>
<dbReference type="DIP" id="DIP-1836N"/>
<dbReference type="FunCoup" id="Q05583">
    <property type="interactions" value="105"/>
</dbReference>
<dbReference type="IntAct" id="Q05583">
    <property type="interactions" value="75"/>
</dbReference>
<dbReference type="MINT" id="Q05583"/>
<dbReference type="STRING" id="4932.YDR267C"/>
<dbReference type="iPTMnet" id="Q05583"/>
<dbReference type="PaxDb" id="4932-YDR267C"/>
<dbReference type="PeptideAtlas" id="Q05583"/>
<dbReference type="EnsemblFungi" id="YDR267C_mRNA">
    <property type="protein sequence ID" value="YDR267C"/>
    <property type="gene ID" value="YDR267C"/>
</dbReference>
<dbReference type="GeneID" id="851860"/>
<dbReference type="KEGG" id="sce:YDR267C"/>
<dbReference type="AGR" id="SGD:S000002675"/>
<dbReference type="SGD" id="S000002675">
    <property type="gene designation" value="CIA1"/>
</dbReference>
<dbReference type="VEuPathDB" id="FungiDB:YDR267C"/>
<dbReference type="eggNOG" id="KOG0645">
    <property type="taxonomic scope" value="Eukaryota"/>
</dbReference>
<dbReference type="GeneTree" id="ENSGT00940000158670"/>
<dbReference type="HOGENOM" id="CLU_000288_57_8_1"/>
<dbReference type="InParanoid" id="Q05583"/>
<dbReference type="OMA" id="IREIRWS"/>
<dbReference type="OrthoDB" id="284782at2759"/>
<dbReference type="BioCyc" id="YEAST:G3O-29837-MONOMER"/>
<dbReference type="BioGRID-ORCS" id="851860">
    <property type="hits" value="0 hits in 10 CRISPR screens"/>
</dbReference>
<dbReference type="EvolutionaryTrace" id="Q05583"/>
<dbReference type="PRO" id="PR:Q05583"/>
<dbReference type="Proteomes" id="UP000002311">
    <property type="component" value="Chromosome IV"/>
</dbReference>
<dbReference type="RNAct" id="Q05583">
    <property type="molecule type" value="protein"/>
</dbReference>
<dbReference type="GO" id="GO:0005737">
    <property type="term" value="C:cytoplasm"/>
    <property type="evidence" value="ECO:0007005"/>
    <property type="project" value="SGD"/>
</dbReference>
<dbReference type="GO" id="GO:0005829">
    <property type="term" value="C:cytosol"/>
    <property type="evidence" value="ECO:0000314"/>
    <property type="project" value="SGD"/>
</dbReference>
<dbReference type="GO" id="GO:0097361">
    <property type="term" value="C:cytosolic [4Fe-4S] assembly targeting complex"/>
    <property type="evidence" value="ECO:0000314"/>
    <property type="project" value="SGD"/>
</dbReference>
<dbReference type="GO" id="GO:0005634">
    <property type="term" value="C:nucleus"/>
    <property type="evidence" value="ECO:0000314"/>
    <property type="project" value="SGD"/>
</dbReference>
<dbReference type="GO" id="GO:0016226">
    <property type="term" value="P:iron-sulfur cluster assembly"/>
    <property type="evidence" value="ECO:0000315"/>
    <property type="project" value="SGD"/>
</dbReference>
<dbReference type="GO" id="GO:0002098">
    <property type="term" value="P:tRNA wobble uridine modification"/>
    <property type="evidence" value="ECO:0000315"/>
    <property type="project" value="SGD"/>
</dbReference>
<dbReference type="CDD" id="cd00200">
    <property type="entry name" value="WD40"/>
    <property type="match status" value="1"/>
</dbReference>
<dbReference type="FunFam" id="2.130.10.10:FF:000705">
    <property type="entry name" value="Probable cytosolic iron-sulfur protein assembly protein 1"/>
    <property type="match status" value="1"/>
</dbReference>
<dbReference type="Gene3D" id="2.130.10.10">
    <property type="entry name" value="YVTN repeat-like/Quinoprotein amine dehydrogenase"/>
    <property type="match status" value="1"/>
</dbReference>
<dbReference type="HAMAP" id="MF_03037">
    <property type="entry name" value="ciao1"/>
    <property type="match status" value="1"/>
</dbReference>
<dbReference type="InterPro" id="IPR028608">
    <property type="entry name" value="CIAO1/Cia1"/>
</dbReference>
<dbReference type="InterPro" id="IPR020472">
    <property type="entry name" value="G-protein_beta_WD-40_rep"/>
</dbReference>
<dbReference type="InterPro" id="IPR015943">
    <property type="entry name" value="WD40/YVTN_repeat-like_dom_sf"/>
</dbReference>
<dbReference type="InterPro" id="IPR036322">
    <property type="entry name" value="WD40_repeat_dom_sf"/>
</dbReference>
<dbReference type="InterPro" id="IPR001680">
    <property type="entry name" value="WD40_rpt"/>
</dbReference>
<dbReference type="PANTHER" id="PTHR19920:SF0">
    <property type="entry name" value="CYTOSOLIC IRON-SULFUR PROTEIN ASSEMBLY PROTEIN CIAO1-RELATED"/>
    <property type="match status" value="1"/>
</dbReference>
<dbReference type="PANTHER" id="PTHR19920">
    <property type="entry name" value="WD40 PROTEIN CIAO1"/>
    <property type="match status" value="1"/>
</dbReference>
<dbReference type="Pfam" id="PF00400">
    <property type="entry name" value="WD40"/>
    <property type="match status" value="4"/>
</dbReference>
<dbReference type="PRINTS" id="PR00320">
    <property type="entry name" value="GPROTEINBRPT"/>
</dbReference>
<dbReference type="SMART" id="SM00320">
    <property type="entry name" value="WD40"/>
    <property type="match status" value="7"/>
</dbReference>
<dbReference type="SUPFAM" id="SSF50978">
    <property type="entry name" value="WD40 repeat-like"/>
    <property type="match status" value="1"/>
</dbReference>
<dbReference type="PROSITE" id="PS00678">
    <property type="entry name" value="WD_REPEATS_1"/>
    <property type="match status" value="1"/>
</dbReference>
<dbReference type="PROSITE" id="PS50082">
    <property type="entry name" value="WD_REPEATS_2"/>
    <property type="match status" value="5"/>
</dbReference>
<dbReference type="PROSITE" id="PS50294">
    <property type="entry name" value="WD_REPEATS_REGION"/>
    <property type="match status" value="1"/>
</dbReference>
<organism>
    <name type="scientific">Saccharomyces cerevisiae (strain ATCC 204508 / S288c)</name>
    <name type="common">Baker's yeast</name>
    <dbReference type="NCBI Taxonomy" id="559292"/>
    <lineage>
        <taxon>Eukaryota</taxon>
        <taxon>Fungi</taxon>
        <taxon>Dikarya</taxon>
        <taxon>Ascomycota</taxon>
        <taxon>Saccharomycotina</taxon>
        <taxon>Saccharomycetes</taxon>
        <taxon>Saccharomycetales</taxon>
        <taxon>Saccharomycetaceae</taxon>
        <taxon>Saccharomyces</taxon>
    </lineage>
</organism>
<feature type="chain" id="PRO_0000253806" description="Cytosolic iron-sulfur protein assembly protein 1">
    <location>
        <begin position="1"/>
        <end position="330"/>
    </location>
</feature>
<feature type="repeat" description="WD 1">
    <location>
        <begin position="12"/>
        <end position="53"/>
    </location>
</feature>
<feature type="repeat" description="WD 2">
    <location>
        <begin position="56"/>
        <end position="95"/>
    </location>
</feature>
<feature type="repeat" description="WD 3">
    <location>
        <begin position="105"/>
        <end position="144"/>
    </location>
</feature>
<feature type="repeat" description="WD 4">
    <location>
        <begin position="151"/>
        <end position="190"/>
    </location>
</feature>
<feature type="repeat" description="WD 5">
    <location>
        <begin position="195"/>
        <end position="236"/>
    </location>
</feature>
<feature type="repeat" description="WD 6">
    <location>
        <begin position="248"/>
        <end position="286"/>
    </location>
</feature>
<feature type="repeat" description="WD 7">
    <location>
        <begin position="292"/>
        <end position="330"/>
    </location>
</feature>
<feature type="mutagenesis site" description="Impaired in cytosolic Fe/S protein assembly." evidence="4">
    <original>R</original>
    <variation>E</variation>
    <location>
        <position position="127"/>
    </location>
</feature>
<feature type="strand" evidence="5">
    <location>
        <begin position="5"/>
        <end position="11"/>
    </location>
</feature>
<feature type="strand" evidence="5">
    <location>
        <begin position="17"/>
        <end position="23"/>
    </location>
</feature>
<feature type="strand" evidence="5">
    <location>
        <begin position="26"/>
        <end position="34"/>
    </location>
</feature>
<feature type="strand" evidence="5">
    <location>
        <begin position="36"/>
        <end position="40"/>
    </location>
</feature>
<feature type="strand" evidence="5">
    <location>
        <begin position="42"/>
        <end position="44"/>
    </location>
</feature>
<feature type="strand" evidence="5">
    <location>
        <begin position="47"/>
        <end position="52"/>
    </location>
</feature>
<feature type="strand" evidence="5">
    <location>
        <begin position="61"/>
        <end position="66"/>
    </location>
</feature>
<feature type="strand" evidence="5">
    <location>
        <begin position="70"/>
        <end position="77"/>
    </location>
</feature>
<feature type="strand" evidence="5">
    <location>
        <begin position="82"/>
        <end position="86"/>
    </location>
</feature>
<feature type="strand" evidence="5">
    <location>
        <begin position="98"/>
        <end position="103"/>
    </location>
</feature>
<feature type="strand" evidence="5">
    <location>
        <begin position="110"/>
        <end position="115"/>
    </location>
</feature>
<feature type="strand" evidence="5">
    <location>
        <begin position="121"/>
        <end position="126"/>
    </location>
</feature>
<feature type="strand" evidence="5">
    <location>
        <begin position="131"/>
        <end position="135"/>
    </location>
</feature>
<feature type="strand" evidence="5">
    <location>
        <begin position="144"/>
        <end position="149"/>
    </location>
</feature>
<feature type="strand" evidence="5">
    <location>
        <begin position="156"/>
        <end position="161"/>
    </location>
</feature>
<feature type="strand" evidence="5">
    <location>
        <begin position="163"/>
        <end position="172"/>
    </location>
</feature>
<feature type="strand" evidence="5">
    <location>
        <begin position="177"/>
        <end position="183"/>
    </location>
</feature>
<feature type="strand" evidence="5">
    <location>
        <begin position="186"/>
        <end position="193"/>
    </location>
</feature>
<feature type="strand" evidence="5">
    <location>
        <begin position="200"/>
        <end position="205"/>
    </location>
</feature>
<feature type="strand" evidence="5">
    <location>
        <begin position="208"/>
        <end position="211"/>
    </location>
</feature>
<feature type="strand" evidence="5">
    <location>
        <begin position="213"/>
        <end position="218"/>
    </location>
</feature>
<feature type="strand" evidence="5">
    <location>
        <begin position="223"/>
        <end position="231"/>
    </location>
</feature>
<feature type="strand" evidence="5">
    <location>
        <begin position="237"/>
        <end position="244"/>
    </location>
</feature>
<feature type="strand" evidence="5">
    <location>
        <begin position="253"/>
        <end position="258"/>
    </location>
</feature>
<feature type="strand" evidence="5">
    <location>
        <begin position="264"/>
        <end position="268"/>
    </location>
</feature>
<feature type="strand" evidence="5">
    <location>
        <begin position="273"/>
        <end position="279"/>
    </location>
</feature>
<feature type="strand" evidence="5">
    <location>
        <begin position="282"/>
        <end position="290"/>
    </location>
</feature>
<feature type="turn" evidence="5">
    <location>
        <begin position="292"/>
        <end position="295"/>
    </location>
</feature>
<feature type="strand" evidence="5">
    <location>
        <begin position="298"/>
        <end position="303"/>
    </location>
</feature>
<feature type="strand" evidence="5">
    <location>
        <begin position="312"/>
        <end position="316"/>
    </location>
</feature>
<feature type="strand" evidence="5">
    <location>
        <begin position="319"/>
        <end position="325"/>
    </location>
</feature>
<proteinExistence type="evidence at protein level"/>
<protein>
    <recommendedName>
        <fullName>Cytosolic iron-sulfur protein assembly protein 1</fullName>
    </recommendedName>
</protein>
<sequence>MASINLIKSLKLYKEKIWSFDFSQGILATGSTDRKIKLVSVKYDDFTLIDVLDETAHKKAIRSVAWRPHTSLLAAGSFDSTVSIWAKEESADRTFEMDLLAIIEGHENEVKGVAWSNDGYYLATCSRDKSVWIWETDESGEEYECISVLQEHSQDVKHVIWHPSEALLASSSYDDTVRIWKDYDDDWECVAVLNGHEGTVWSSDFDKTEGVFRLCSGSDDSTVRVWKYMGDDEDDQQEWVCEAILPDVHKRQVYNVAWGFNGLIASVGADGVLAVYEEVDGEWKVFAKRALCHGVYEINVVKWLELNGKTILATGGDDGIVNFWSLEKAA</sequence>
<evidence type="ECO:0000255" key="1">
    <source>
        <dbReference type="HAMAP-Rule" id="MF_03037"/>
    </source>
</evidence>
<evidence type="ECO:0000269" key="2">
    <source>
    </source>
</evidence>
<evidence type="ECO:0000269" key="3">
    <source>
    </source>
</evidence>
<evidence type="ECO:0000269" key="4">
    <source>
    </source>
</evidence>
<evidence type="ECO:0007829" key="5">
    <source>
        <dbReference type="PDB" id="2HES"/>
    </source>
</evidence>
<reference key="1">
    <citation type="journal article" date="1997" name="Nature">
        <title>The nucleotide sequence of Saccharomyces cerevisiae chromosome IV.</title>
        <authorList>
            <person name="Jacq C."/>
            <person name="Alt-Moerbe J."/>
            <person name="Andre B."/>
            <person name="Arnold W."/>
            <person name="Bahr A."/>
            <person name="Ballesta J.P.G."/>
            <person name="Bargues M."/>
            <person name="Baron L."/>
            <person name="Becker A."/>
            <person name="Biteau N."/>
            <person name="Bloecker H."/>
            <person name="Blugeon C."/>
            <person name="Boskovic J."/>
            <person name="Brandt P."/>
            <person name="Brueckner M."/>
            <person name="Buitrago M.J."/>
            <person name="Coster F."/>
            <person name="Delaveau T."/>
            <person name="del Rey F."/>
            <person name="Dujon B."/>
            <person name="Eide L.G."/>
            <person name="Garcia-Cantalejo J.M."/>
            <person name="Goffeau A."/>
            <person name="Gomez-Peris A."/>
            <person name="Granotier C."/>
            <person name="Hanemann V."/>
            <person name="Hankeln T."/>
            <person name="Hoheisel J.D."/>
            <person name="Jaeger W."/>
            <person name="Jimenez A."/>
            <person name="Jonniaux J.-L."/>
            <person name="Kraemer C."/>
            <person name="Kuester H."/>
            <person name="Laamanen P."/>
            <person name="Legros Y."/>
            <person name="Louis E.J."/>
            <person name="Moeller-Rieker S."/>
            <person name="Monnet A."/>
            <person name="Moro M."/>
            <person name="Mueller-Auer S."/>
            <person name="Nussbaumer B."/>
            <person name="Paricio N."/>
            <person name="Paulin L."/>
            <person name="Perea J."/>
            <person name="Perez-Alonso M."/>
            <person name="Perez-Ortin J.E."/>
            <person name="Pohl T.M."/>
            <person name="Prydz H."/>
            <person name="Purnelle B."/>
            <person name="Rasmussen S.W."/>
            <person name="Remacha M.A."/>
            <person name="Revuelta J.L."/>
            <person name="Rieger M."/>
            <person name="Salom D."/>
            <person name="Saluz H.P."/>
            <person name="Saiz J.E."/>
            <person name="Saren A.-M."/>
            <person name="Schaefer M."/>
            <person name="Scharfe M."/>
            <person name="Schmidt E.R."/>
            <person name="Schneider C."/>
            <person name="Scholler P."/>
            <person name="Schwarz S."/>
            <person name="Soler-Mira A."/>
            <person name="Urrestarazu L.A."/>
            <person name="Verhasselt P."/>
            <person name="Vissers S."/>
            <person name="Voet M."/>
            <person name="Volckaert G."/>
            <person name="Wagner G."/>
            <person name="Wambutt R."/>
            <person name="Wedler E."/>
            <person name="Wedler H."/>
            <person name="Woelfl S."/>
            <person name="Harris D.E."/>
            <person name="Bowman S."/>
            <person name="Brown D."/>
            <person name="Churcher C.M."/>
            <person name="Connor R."/>
            <person name="Dedman K."/>
            <person name="Gentles S."/>
            <person name="Hamlin N."/>
            <person name="Hunt S."/>
            <person name="Jones L."/>
            <person name="McDonald S."/>
            <person name="Murphy L.D."/>
            <person name="Niblett D."/>
            <person name="Odell C."/>
            <person name="Oliver K."/>
            <person name="Rajandream M.A."/>
            <person name="Richards C."/>
            <person name="Shore L."/>
            <person name="Walsh S.V."/>
            <person name="Barrell B.G."/>
            <person name="Dietrich F.S."/>
            <person name="Mulligan J.T."/>
            <person name="Allen E."/>
            <person name="Araujo R."/>
            <person name="Aviles E."/>
            <person name="Berno A."/>
            <person name="Carpenter J."/>
            <person name="Chen E."/>
            <person name="Cherry J.M."/>
            <person name="Chung E."/>
            <person name="Duncan M."/>
            <person name="Hunicke-Smith S."/>
            <person name="Hyman R.W."/>
            <person name="Komp C."/>
            <person name="Lashkari D."/>
            <person name="Lew H."/>
            <person name="Lin D."/>
            <person name="Mosedale D."/>
            <person name="Nakahara K."/>
            <person name="Namath A."/>
            <person name="Oefner P."/>
            <person name="Oh C."/>
            <person name="Petel F.X."/>
            <person name="Roberts D."/>
            <person name="Schramm S."/>
            <person name="Schroeder M."/>
            <person name="Shogren T."/>
            <person name="Shroff N."/>
            <person name="Winant A."/>
            <person name="Yelton M.A."/>
            <person name="Botstein D."/>
            <person name="Davis R.W."/>
            <person name="Johnston M."/>
            <person name="Andrews S."/>
            <person name="Brinkman R."/>
            <person name="Cooper J."/>
            <person name="Ding H."/>
            <person name="Du Z."/>
            <person name="Favello A."/>
            <person name="Fulton L."/>
            <person name="Gattung S."/>
            <person name="Greco T."/>
            <person name="Hallsworth K."/>
            <person name="Hawkins J."/>
            <person name="Hillier L.W."/>
            <person name="Jier M."/>
            <person name="Johnson D."/>
            <person name="Johnston L."/>
            <person name="Kirsten J."/>
            <person name="Kucaba T."/>
            <person name="Langston Y."/>
            <person name="Latreille P."/>
            <person name="Le T."/>
            <person name="Mardis E."/>
            <person name="Menezes S."/>
            <person name="Miller N."/>
            <person name="Nhan M."/>
            <person name="Pauley A."/>
            <person name="Peluso D."/>
            <person name="Rifkin L."/>
            <person name="Riles L."/>
            <person name="Taich A."/>
            <person name="Trevaskis E."/>
            <person name="Vignati D."/>
            <person name="Wilcox L."/>
            <person name="Wohldman P."/>
            <person name="Vaudin M."/>
            <person name="Wilson R."/>
            <person name="Waterston R."/>
            <person name="Albermann K."/>
            <person name="Hani J."/>
            <person name="Heumann K."/>
            <person name="Kleine K."/>
            <person name="Mewes H.-W."/>
            <person name="Zollner A."/>
            <person name="Zaccaria P."/>
        </authorList>
    </citation>
    <scope>NUCLEOTIDE SEQUENCE [LARGE SCALE GENOMIC DNA]</scope>
    <source>
        <strain>ATCC 204508 / S288c</strain>
    </source>
</reference>
<reference key="2">
    <citation type="journal article" date="2014" name="G3 (Bethesda)">
        <title>The reference genome sequence of Saccharomyces cerevisiae: Then and now.</title>
        <authorList>
            <person name="Engel S.R."/>
            <person name="Dietrich F.S."/>
            <person name="Fisk D.G."/>
            <person name="Binkley G."/>
            <person name="Balakrishnan R."/>
            <person name="Costanzo M.C."/>
            <person name="Dwight S.S."/>
            <person name="Hitz B.C."/>
            <person name="Karra K."/>
            <person name="Nash R.S."/>
            <person name="Weng S."/>
            <person name="Wong E.D."/>
            <person name="Lloyd P."/>
            <person name="Skrzypek M.S."/>
            <person name="Miyasato S.R."/>
            <person name="Simison M."/>
            <person name="Cherry J.M."/>
        </authorList>
    </citation>
    <scope>GENOME REANNOTATION</scope>
    <source>
        <strain>ATCC 204508 / S288c</strain>
    </source>
</reference>
<reference key="3">
    <citation type="journal article" date="2003" name="Nature">
        <title>Global analysis of protein localization in budding yeast.</title>
        <authorList>
            <person name="Huh W.-K."/>
            <person name="Falvo J.V."/>
            <person name="Gerke L.C."/>
            <person name="Carroll A.S."/>
            <person name="Howson R.W."/>
            <person name="Weissman J.S."/>
            <person name="O'Shea E.K."/>
        </authorList>
    </citation>
    <scope>SUBCELLULAR LOCATION [LARGE SCALE ANALYSIS]</scope>
</reference>
<reference key="4">
    <citation type="journal article" date="2003" name="Nature">
        <title>Global analysis of protein expression in yeast.</title>
        <authorList>
            <person name="Ghaemmaghami S."/>
            <person name="Huh W.-K."/>
            <person name="Bower K."/>
            <person name="Howson R.W."/>
            <person name="Belle A."/>
            <person name="Dephoure N."/>
            <person name="O'Shea E.K."/>
            <person name="Weissman J.S."/>
        </authorList>
    </citation>
    <scope>LEVEL OF PROTEIN EXPRESSION [LARGE SCALE ANALYSIS]</scope>
</reference>
<reference key="5">
    <citation type="journal article" date="2005" name="Mol. Cell. Biol.">
        <title>The essential WD40 protein Cia1 is involved in a late step of cytosolic and nuclear iron-sulfur protein assembly.</title>
        <authorList>
            <person name="Balk J."/>
            <person name="Aguilar Netz D.J.A."/>
            <person name="Tepper K."/>
            <person name="Pierik A.J."/>
            <person name="Lill R."/>
        </authorList>
    </citation>
    <scope>FUNCTION</scope>
    <scope>INTERACTION WITH NAR1</scope>
    <scope>SUBCELLULAR LOCATION</scope>
</reference>
<reference key="6">
    <citation type="journal article" date="2007" name="Structure">
        <title>Structure of the yeast WD40 domain protein Cia1, a component acting late in iron-sulfur protein biogenesis.</title>
        <authorList>
            <person name="Srinivasan V."/>
            <person name="Netz D.J.A."/>
            <person name="Webert H."/>
            <person name="Mascarenhas J."/>
            <person name="Pierik A.J."/>
            <person name="Michel H."/>
            <person name="Lill R."/>
        </authorList>
    </citation>
    <scope>X-RAY CRYSTALLOGRAPHY (1.7 ANGSTROMS)</scope>
    <scope>DOMAINS WD REPEATS</scope>
    <scope>MUTAGENESIS OF ARG-127</scope>
</reference>
<gene>
    <name evidence="1" type="primary">CIA1</name>
    <name type="ordered locus">YDR267C</name>
</gene>
<accession>Q05583</accession>
<accession>D6VSQ1</accession>
<name>CIAO1_YEAST</name>